<name>GPA1_SPOS1</name>
<evidence type="ECO:0000250" key="1"/>
<evidence type="ECO:0000250" key="2">
    <source>
        <dbReference type="UniProtKB" id="P08539"/>
    </source>
</evidence>
<evidence type="ECO:0000250" key="3">
    <source>
        <dbReference type="UniProtKB" id="P18064"/>
    </source>
</evidence>
<evidence type="ECO:0000255" key="4">
    <source>
        <dbReference type="PROSITE-ProRule" id="PRU01230"/>
    </source>
</evidence>
<evidence type="ECO:0000256" key="5">
    <source>
        <dbReference type="SAM" id="MobiDB-lite"/>
    </source>
</evidence>
<evidence type="ECO:0000305" key="6"/>
<sequence length="353" mass="41132">MGCGMSVEEKEGKARNEEIENQLKRDRMQQRNEIKMLLLGAGESGKSTILKQMKLIHEGGYSRDERESFKEIIYSNTVQSMRVILEAMESLELPLEDQRMEYHVQTIFMQPAQIEGEVLPPEVGNAIEALWKDRGVQECFKRSREYQLNDSARYYFDNIARIAAPDYMPDDQDVLRSRVKTTGITETTFIIGDLTYRMFDVGGQRSERKKWIHCFENVTTILFLVAISEYDQLLFEDETVNRMQEALTLFDSICNSRWFIKTSIILFLNKIDRFKEKLPISPMKNYFPDYEGGDDYAAACDYILNRFVNLNQHESKQIYTHFTCATDTTQIRFVMAAVNDIIIQENLRLCGLI</sequence>
<reference key="1">
    <citation type="journal article" date="2000" name="Med. Mycol.">
        <title>Presence of a pertussis toxin-sensitive G protein alpha subunit in Sporothrix schenckii.</title>
        <authorList>
            <person name="Delgado N."/>
            <person name="Rodriguez-del Valle N."/>
        </authorList>
    </citation>
    <scope>NUCLEOTIDE SEQUENCE [GENOMIC DNA / MRNA]</scope>
    <source>
        <strain>ATCC 58251 / de Perez 2211183</strain>
    </source>
</reference>
<reference key="2">
    <citation type="journal article" date="2014" name="Genome Announc.">
        <title>Genome sequence of the pathogenic fungus Sporothrix schenckii (ATCC 58251).</title>
        <authorList>
            <person name="Cuomo C.A."/>
            <person name="Rodriguez-Del Valle N."/>
            <person name="Perez-Sanchez L."/>
            <person name="Abouelleil A."/>
            <person name="Goldberg J."/>
            <person name="Young S."/>
            <person name="Zeng Q."/>
            <person name="Birren B.W."/>
        </authorList>
    </citation>
    <scope>NUCLEOTIDE SEQUENCE [LARGE SCALE GENOMIC DNA]</scope>
    <source>
        <strain>ATCC 58251 / de Perez 2211183</strain>
    </source>
</reference>
<organism>
    <name type="scientific">Sporothrix schenckii (strain ATCC 58251 / de Perez 2211183)</name>
    <name type="common">Rose-picker's disease fungus</name>
    <dbReference type="NCBI Taxonomy" id="1391915"/>
    <lineage>
        <taxon>Eukaryota</taxon>
        <taxon>Fungi</taxon>
        <taxon>Dikarya</taxon>
        <taxon>Ascomycota</taxon>
        <taxon>Pezizomycotina</taxon>
        <taxon>Sordariomycetes</taxon>
        <taxon>Sordariomycetidae</taxon>
        <taxon>Ophiostomatales</taxon>
        <taxon>Ophiostomataceae</taxon>
        <taxon>Sporothrix</taxon>
    </lineage>
</organism>
<gene>
    <name type="primary">SSG-1</name>
    <name type="ORF">HMPREF1624_06103</name>
</gene>
<protein>
    <recommendedName>
        <fullName>Guanine nucleotide-binding protein subunit alpha</fullName>
    </recommendedName>
</protein>
<accession>O74259</accession>
<accession>U7PQT7</accession>
<comment type="function">
    <text>Guanine nucleotide-binding proteins (G proteins) are involved as modulators or transducers in various transmembrane signaling systems.</text>
</comment>
<comment type="cofactor">
    <cofactor evidence="3">
        <name>Mg(2+)</name>
        <dbReference type="ChEBI" id="CHEBI:18420"/>
    </cofactor>
</comment>
<comment type="subunit">
    <text>G proteins are composed of 3 units; alpha, beta and gamma. The alpha chain contains the guanine nucleotide binding site.</text>
</comment>
<comment type="similarity">
    <text evidence="6">Belongs to the G-alpha family. G(q) subfamily.</text>
</comment>
<feature type="initiator methionine" description="Removed" evidence="1">
    <location>
        <position position="1"/>
    </location>
</feature>
<feature type="chain" id="PRO_0000203610" description="Guanine nucleotide-binding protein subunit alpha">
    <location>
        <begin position="2"/>
        <end position="353"/>
    </location>
</feature>
<feature type="domain" description="G-alpha" evidence="4">
    <location>
        <begin position="32"/>
        <end position="353"/>
    </location>
</feature>
<feature type="region of interest" description="Disordered" evidence="5">
    <location>
        <begin position="1"/>
        <end position="26"/>
    </location>
</feature>
<feature type="region of interest" description="G1 motif" evidence="4">
    <location>
        <begin position="35"/>
        <end position="48"/>
    </location>
</feature>
<feature type="region of interest" description="G2 motif" evidence="4">
    <location>
        <begin position="173"/>
        <end position="181"/>
    </location>
</feature>
<feature type="region of interest" description="G3 motif" evidence="4">
    <location>
        <begin position="196"/>
        <end position="205"/>
    </location>
</feature>
<feature type="region of interest" description="G4 motif" evidence="4">
    <location>
        <begin position="265"/>
        <end position="272"/>
    </location>
</feature>
<feature type="region of interest" description="G5 motif" evidence="4">
    <location>
        <begin position="323"/>
        <end position="328"/>
    </location>
</feature>
<feature type="compositionally biased region" description="Basic and acidic residues" evidence="5">
    <location>
        <begin position="7"/>
        <end position="26"/>
    </location>
</feature>
<feature type="binding site" evidence="3">
    <location>
        <position position="43"/>
    </location>
    <ligand>
        <name>GTP</name>
        <dbReference type="ChEBI" id="CHEBI:37565"/>
    </ligand>
</feature>
<feature type="binding site" evidence="3">
    <location>
        <position position="44"/>
    </location>
    <ligand>
        <name>GTP</name>
        <dbReference type="ChEBI" id="CHEBI:37565"/>
    </ligand>
</feature>
<feature type="binding site" evidence="3">
    <location>
        <position position="45"/>
    </location>
    <ligand>
        <name>GTP</name>
        <dbReference type="ChEBI" id="CHEBI:37565"/>
    </ligand>
</feature>
<feature type="binding site" evidence="3">
    <location>
        <position position="46"/>
    </location>
    <ligand>
        <name>GTP</name>
        <dbReference type="ChEBI" id="CHEBI:37565"/>
    </ligand>
</feature>
<feature type="binding site" evidence="3">
    <location>
        <position position="47"/>
    </location>
    <ligand>
        <name>GTP</name>
        <dbReference type="ChEBI" id="CHEBI:37565"/>
    </ligand>
</feature>
<feature type="binding site" evidence="3">
    <location>
        <position position="47"/>
    </location>
    <ligand>
        <name>Mg(2+)</name>
        <dbReference type="ChEBI" id="CHEBI:18420"/>
    </ligand>
</feature>
<feature type="binding site" evidence="3">
    <location>
        <position position="48"/>
    </location>
    <ligand>
        <name>GTP</name>
        <dbReference type="ChEBI" id="CHEBI:37565"/>
    </ligand>
</feature>
<feature type="binding site" evidence="3">
    <location>
        <position position="150"/>
    </location>
    <ligand>
        <name>GTP</name>
        <dbReference type="ChEBI" id="CHEBI:37565"/>
    </ligand>
</feature>
<feature type="binding site" evidence="3">
    <location>
        <position position="175"/>
    </location>
    <ligand>
        <name>GTP</name>
        <dbReference type="ChEBI" id="CHEBI:37565"/>
    </ligand>
</feature>
<feature type="binding site" evidence="3">
    <location>
        <position position="181"/>
    </location>
    <ligand>
        <name>GTP</name>
        <dbReference type="ChEBI" id="CHEBI:37565"/>
    </ligand>
</feature>
<feature type="binding site" evidence="3">
    <location>
        <position position="181"/>
    </location>
    <ligand>
        <name>Mg(2+)</name>
        <dbReference type="ChEBI" id="CHEBI:18420"/>
    </ligand>
</feature>
<feature type="binding site" evidence="3">
    <location>
        <position position="203"/>
    </location>
    <ligand>
        <name>GTP</name>
        <dbReference type="ChEBI" id="CHEBI:37565"/>
    </ligand>
</feature>
<feature type="binding site" evidence="3">
    <location>
        <position position="269"/>
    </location>
    <ligand>
        <name>GTP</name>
        <dbReference type="ChEBI" id="CHEBI:37565"/>
    </ligand>
</feature>
<feature type="binding site" evidence="3">
    <location>
        <position position="270"/>
    </location>
    <ligand>
        <name>GTP</name>
        <dbReference type="ChEBI" id="CHEBI:37565"/>
    </ligand>
</feature>
<feature type="binding site" evidence="3">
    <location>
        <position position="272"/>
    </location>
    <ligand>
        <name>GTP</name>
        <dbReference type="ChEBI" id="CHEBI:37565"/>
    </ligand>
</feature>
<feature type="binding site" evidence="3">
    <location>
        <position position="325"/>
    </location>
    <ligand>
        <name>GTP</name>
        <dbReference type="ChEBI" id="CHEBI:37565"/>
    </ligand>
</feature>
<feature type="lipid moiety-binding region" description="N-myristoyl glycine" evidence="2">
    <location>
        <position position="2"/>
    </location>
</feature>
<feature type="lipid moiety-binding region" description="S-palmitoyl cysteine" evidence="2">
    <location>
        <position position="3"/>
    </location>
</feature>
<feature type="sequence conflict" description="In Ref. 1; AAC34129/AAC67526." evidence="6" ref="1">
    <original>RG</original>
    <variation>AV</variation>
    <location>
        <begin position="134"/>
        <end position="135"/>
    </location>
</feature>
<feature type="sequence conflict" description="In Ref. 1; AAC34129/AAC67526." evidence="6" ref="1">
    <original>T</original>
    <variation>K</variation>
    <location>
        <position position="187"/>
    </location>
</feature>
<keyword id="KW-0342">GTP-binding</keyword>
<keyword id="KW-0378">Hydrolase</keyword>
<keyword id="KW-0449">Lipoprotein</keyword>
<keyword id="KW-0460">Magnesium</keyword>
<keyword id="KW-0479">Metal-binding</keyword>
<keyword id="KW-0519">Myristate</keyword>
<keyword id="KW-0547">Nucleotide-binding</keyword>
<keyword id="KW-0564">Palmitate</keyword>
<keyword id="KW-1185">Reference proteome</keyword>
<keyword id="KW-0807">Transducer</keyword>
<dbReference type="EMBL" id="AF085339">
    <property type="protein sequence ID" value="AAC34129.1"/>
    <property type="molecule type" value="mRNA"/>
</dbReference>
<dbReference type="EMBL" id="AF068248">
    <property type="protein sequence ID" value="AAC67526.1"/>
    <property type="molecule type" value="Genomic_DNA"/>
</dbReference>
<dbReference type="EMBL" id="KI440847">
    <property type="protein sequence ID" value="ERS97932.1"/>
    <property type="molecule type" value="Genomic_DNA"/>
</dbReference>
<dbReference type="SMR" id="O74259"/>
<dbReference type="STRING" id="1391915.O74259"/>
<dbReference type="eggNOG" id="KOG0082">
    <property type="taxonomic scope" value="Eukaryota"/>
</dbReference>
<dbReference type="HOGENOM" id="CLU_014184_6_0_1"/>
<dbReference type="OrthoDB" id="3611at147550"/>
<dbReference type="Proteomes" id="UP000018087">
    <property type="component" value="Unassembled WGS sequence"/>
</dbReference>
<dbReference type="GO" id="GO:0005737">
    <property type="term" value="C:cytoplasm"/>
    <property type="evidence" value="ECO:0007669"/>
    <property type="project" value="TreeGrafter"/>
</dbReference>
<dbReference type="GO" id="GO:0005834">
    <property type="term" value="C:heterotrimeric G-protein complex"/>
    <property type="evidence" value="ECO:0007669"/>
    <property type="project" value="InterPro"/>
</dbReference>
<dbReference type="GO" id="GO:0001664">
    <property type="term" value="F:G protein-coupled receptor binding"/>
    <property type="evidence" value="ECO:0007669"/>
    <property type="project" value="InterPro"/>
</dbReference>
<dbReference type="GO" id="GO:0031683">
    <property type="term" value="F:G-protein beta/gamma-subunit complex binding"/>
    <property type="evidence" value="ECO:0007669"/>
    <property type="project" value="InterPro"/>
</dbReference>
<dbReference type="GO" id="GO:0005525">
    <property type="term" value="F:GTP binding"/>
    <property type="evidence" value="ECO:0007669"/>
    <property type="project" value="UniProtKB-KW"/>
</dbReference>
<dbReference type="GO" id="GO:0003924">
    <property type="term" value="F:GTPase activity"/>
    <property type="evidence" value="ECO:0007669"/>
    <property type="project" value="InterPro"/>
</dbReference>
<dbReference type="GO" id="GO:0046872">
    <property type="term" value="F:metal ion binding"/>
    <property type="evidence" value="ECO:0007669"/>
    <property type="project" value="UniProtKB-KW"/>
</dbReference>
<dbReference type="GO" id="GO:0007186">
    <property type="term" value="P:G protein-coupled receptor signaling pathway"/>
    <property type="evidence" value="ECO:0007669"/>
    <property type="project" value="InterPro"/>
</dbReference>
<dbReference type="GO" id="GO:0000750">
    <property type="term" value="P:pheromone-dependent signal transduction involved in conjugation with cellular fusion"/>
    <property type="evidence" value="ECO:0007669"/>
    <property type="project" value="TreeGrafter"/>
</dbReference>
<dbReference type="CDD" id="cd00066">
    <property type="entry name" value="G-alpha"/>
    <property type="match status" value="1"/>
</dbReference>
<dbReference type="FunFam" id="1.10.400.10:FF:000001">
    <property type="entry name" value="Guanine nucleotide-binding protein G(I) subunit alpha"/>
    <property type="match status" value="1"/>
</dbReference>
<dbReference type="FunFam" id="3.40.50.300:FF:000051">
    <property type="entry name" value="Guanine nucleotide-binding protein subunit alpha"/>
    <property type="match status" value="1"/>
</dbReference>
<dbReference type="FunFam" id="3.40.50.300:FF:000692">
    <property type="entry name" value="Guanine nucleotide-binding protein subunit alpha"/>
    <property type="match status" value="1"/>
</dbReference>
<dbReference type="Gene3D" id="1.10.400.10">
    <property type="entry name" value="GI Alpha 1, domain 2-like"/>
    <property type="match status" value="1"/>
</dbReference>
<dbReference type="Gene3D" id="3.40.50.300">
    <property type="entry name" value="P-loop containing nucleotide triphosphate hydrolases"/>
    <property type="match status" value="1"/>
</dbReference>
<dbReference type="InterPro" id="IPR002975">
    <property type="entry name" value="Fungi_Gprotein_alpha"/>
</dbReference>
<dbReference type="InterPro" id="IPR001019">
    <property type="entry name" value="Gprotein_alpha_su"/>
</dbReference>
<dbReference type="InterPro" id="IPR011025">
    <property type="entry name" value="GproteinA_insert"/>
</dbReference>
<dbReference type="InterPro" id="IPR027417">
    <property type="entry name" value="P-loop_NTPase"/>
</dbReference>
<dbReference type="PANTHER" id="PTHR10218">
    <property type="entry name" value="GTP-BINDING PROTEIN ALPHA SUBUNIT"/>
    <property type="match status" value="1"/>
</dbReference>
<dbReference type="PANTHER" id="PTHR10218:SF302">
    <property type="entry name" value="GUANINE NUCLEOTIDE-BINDING PROTEIN ALPHA-5 SUBUNIT"/>
    <property type="match status" value="1"/>
</dbReference>
<dbReference type="Pfam" id="PF00503">
    <property type="entry name" value="G-alpha"/>
    <property type="match status" value="1"/>
</dbReference>
<dbReference type="PRINTS" id="PR00318">
    <property type="entry name" value="GPROTEINA"/>
</dbReference>
<dbReference type="PRINTS" id="PR01241">
    <property type="entry name" value="GPROTEINAFNG"/>
</dbReference>
<dbReference type="SMART" id="SM00275">
    <property type="entry name" value="G_alpha"/>
    <property type="match status" value="1"/>
</dbReference>
<dbReference type="SUPFAM" id="SSF52540">
    <property type="entry name" value="P-loop containing nucleoside triphosphate hydrolases"/>
    <property type="match status" value="1"/>
</dbReference>
<dbReference type="SUPFAM" id="SSF47895">
    <property type="entry name" value="Transducin (alpha subunit), insertion domain"/>
    <property type="match status" value="1"/>
</dbReference>
<dbReference type="PROSITE" id="PS51882">
    <property type="entry name" value="G_ALPHA"/>
    <property type="match status" value="1"/>
</dbReference>
<proteinExistence type="evidence at transcript level"/>